<organism>
    <name type="scientific">Dictyostelium discoideum</name>
    <name type="common">Social amoeba</name>
    <dbReference type="NCBI Taxonomy" id="44689"/>
    <lineage>
        <taxon>Eukaryota</taxon>
        <taxon>Amoebozoa</taxon>
        <taxon>Evosea</taxon>
        <taxon>Eumycetozoa</taxon>
        <taxon>Dictyostelia</taxon>
        <taxon>Dictyosteliales</taxon>
        <taxon>Dictyosteliaceae</taxon>
        <taxon>Dictyostelium</taxon>
    </lineage>
</organism>
<feature type="chain" id="PRO_0000328387" description="Golgi to ER traffic protein 4 homolog">
    <location>
        <begin position="1"/>
        <end position="309"/>
    </location>
</feature>
<feature type="region of interest" description="Disordered" evidence="2">
    <location>
        <begin position="290"/>
        <end position="309"/>
    </location>
</feature>
<gene>
    <name type="ORF">DDB_G0281815</name>
</gene>
<comment type="function">
    <text evidence="1">May play a role in insertion of tail-anchored proteins into the endoplasmic reticulum membrane.</text>
</comment>
<comment type="similarity">
    <text evidence="3">Belongs to the GET4 family.</text>
</comment>
<reference key="1">
    <citation type="journal article" date="2005" name="Nature">
        <title>The genome of the social amoeba Dictyostelium discoideum.</title>
        <authorList>
            <person name="Eichinger L."/>
            <person name="Pachebat J.A."/>
            <person name="Gloeckner G."/>
            <person name="Rajandream M.A."/>
            <person name="Sucgang R."/>
            <person name="Berriman M."/>
            <person name="Song J."/>
            <person name="Olsen R."/>
            <person name="Szafranski K."/>
            <person name="Xu Q."/>
            <person name="Tunggal B."/>
            <person name="Kummerfeld S."/>
            <person name="Madera M."/>
            <person name="Konfortov B.A."/>
            <person name="Rivero F."/>
            <person name="Bankier A.T."/>
            <person name="Lehmann R."/>
            <person name="Hamlin N."/>
            <person name="Davies R."/>
            <person name="Gaudet P."/>
            <person name="Fey P."/>
            <person name="Pilcher K."/>
            <person name="Chen G."/>
            <person name="Saunders D."/>
            <person name="Sodergren E.J."/>
            <person name="Davis P."/>
            <person name="Kerhornou A."/>
            <person name="Nie X."/>
            <person name="Hall N."/>
            <person name="Anjard C."/>
            <person name="Hemphill L."/>
            <person name="Bason N."/>
            <person name="Farbrother P."/>
            <person name="Desany B."/>
            <person name="Just E."/>
            <person name="Morio T."/>
            <person name="Rost R."/>
            <person name="Churcher C.M."/>
            <person name="Cooper J."/>
            <person name="Haydock S."/>
            <person name="van Driessche N."/>
            <person name="Cronin A."/>
            <person name="Goodhead I."/>
            <person name="Muzny D.M."/>
            <person name="Mourier T."/>
            <person name="Pain A."/>
            <person name="Lu M."/>
            <person name="Harper D."/>
            <person name="Lindsay R."/>
            <person name="Hauser H."/>
            <person name="James K.D."/>
            <person name="Quiles M."/>
            <person name="Madan Babu M."/>
            <person name="Saito T."/>
            <person name="Buchrieser C."/>
            <person name="Wardroper A."/>
            <person name="Felder M."/>
            <person name="Thangavelu M."/>
            <person name="Johnson D."/>
            <person name="Knights A."/>
            <person name="Loulseged H."/>
            <person name="Mungall K.L."/>
            <person name="Oliver K."/>
            <person name="Price C."/>
            <person name="Quail M.A."/>
            <person name="Urushihara H."/>
            <person name="Hernandez J."/>
            <person name="Rabbinowitsch E."/>
            <person name="Steffen D."/>
            <person name="Sanders M."/>
            <person name="Ma J."/>
            <person name="Kohara Y."/>
            <person name="Sharp S."/>
            <person name="Simmonds M.N."/>
            <person name="Spiegler S."/>
            <person name="Tivey A."/>
            <person name="Sugano S."/>
            <person name="White B."/>
            <person name="Walker D."/>
            <person name="Woodward J.R."/>
            <person name="Winckler T."/>
            <person name="Tanaka Y."/>
            <person name="Shaulsky G."/>
            <person name="Schleicher M."/>
            <person name="Weinstock G.M."/>
            <person name="Rosenthal A."/>
            <person name="Cox E.C."/>
            <person name="Chisholm R.L."/>
            <person name="Gibbs R.A."/>
            <person name="Loomis W.F."/>
            <person name="Platzer M."/>
            <person name="Kay R.R."/>
            <person name="Williams J.G."/>
            <person name="Dear P.H."/>
            <person name="Noegel A.A."/>
            <person name="Barrell B.G."/>
            <person name="Kuspa A."/>
        </authorList>
    </citation>
    <scope>NUCLEOTIDE SEQUENCE [LARGE SCALE GENOMIC DNA]</scope>
    <source>
        <strain>AX4</strain>
    </source>
</reference>
<keyword id="KW-1185">Reference proteome</keyword>
<evidence type="ECO:0000250" key="1"/>
<evidence type="ECO:0000256" key="2">
    <source>
        <dbReference type="SAM" id="MobiDB-lite"/>
    </source>
</evidence>
<evidence type="ECO:0000305" key="3"/>
<dbReference type="EMBL" id="AAFI02000042">
    <property type="protein sequence ID" value="EAL66669.1"/>
    <property type="molecule type" value="Genomic_DNA"/>
</dbReference>
<dbReference type="RefSeq" id="XP_640617.1">
    <property type="nucleotide sequence ID" value="XM_635525.1"/>
</dbReference>
<dbReference type="SMR" id="Q54TH4"/>
<dbReference type="FunCoup" id="Q54TH4">
    <property type="interactions" value="515"/>
</dbReference>
<dbReference type="STRING" id="44689.Q54TH4"/>
<dbReference type="PaxDb" id="44689-DDB0266864"/>
<dbReference type="EnsemblProtists" id="EAL66669">
    <property type="protein sequence ID" value="EAL66669"/>
    <property type="gene ID" value="DDB_G0281815"/>
</dbReference>
<dbReference type="GeneID" id="8623227"/>
<dbReference type="KEGG" id="ddi:DDB_G0281815"/>
<dbReference type="dictyBase" id="DDB_G0281815"/>
<dbReference type="VEuPathDB" id="AmoebaDB:DDB_G0281815"/>
<dbReference type="eggNOG" id="KOG3024">
    <property type="taxonomic scope" value="Eukaryota"/>
</dbReference>
<dbReference type="HOGENOM" id="CLU_046061_1_1_1"/>
<dbReference type="InParanoid" id="Q54TH4"/>
<dbReference type="OMA" id="LMDMMGM"/>
<dbReference type="PhylomeDB" id="Q54TH4"/>
<dbReference type="PRO" id="PR:Q54TH4"/>
<dbReference type="Proteomes" id="UP000002195">
    <property type="component" value="Chromosome 3"/>
</dbReference>
<dbReference type="GO" id="GO:0005829">
    <property type="term" value="C:cytosol"/>
    <property type="evidence" value="ECO:0000318"/>
    <property type="project" value="GO_Central"/>
</dbReference>
<dbReference type="GO" id="GO:0045048">
    <property type="term" value="P:protein insertion into ER membrane"/>
    <property type="evidence" value="ECO:0000318"/>
    <property type="project" value="GO_Central"/>
</dbReference>
<dbReference type="FunFam" id="1.25.40.10:FF:002656">
    <property type="entry name" value="Golgi to ER traffic protein 4 homolog"/>
    <property type="match status" value="1"/>
</dbReference>
<dbReference type="Gene3D" id="1.25.40.10">
    <property type="entry name" value="Tetratricopeptide repeat domain"/>
    <property type="match status" value="1"/>
</dbReference>
<dbReference type="InterPro" id="IPR007317">
    <property type="entry name" value="GET4"/>
</dbReference>
<dbReference type="InterPro" id="IPR011990">
    <property type="entry name" value="TPR-like_helical_dom_sf"/>
</dbReference>
<dbReference type="PANTHER" id="PTHR12875">
    <property type="entry name" value="GOLGI TO ER TRAFFIC PROTEIN 4 HOMOLOG"/>
    <property type="match status" value="1"/>
</dbReference>
<dbReference type="PANTHER" id="PTHR12875:SF0">
    <property type="entry name" value="GOLGI TO ER TRAFFIC PROTEIN 4 HOMOLOG"/>
    <property type="match status" value="1"/>
</dbReference>
<dbReference type="Pfam" id="PF04190">
    <property type="entry name" value="GET4"/>
    <property type="match status" value="1"/>
</dbReference>
<accession>Q54TH4</accession>
<proteinExistence type="inferred from homology"/>
<name>GET4_DICDI</name>
<protein>
    <recommendedName>
        <fullName>Golgi to ER traffic protein 4 homolog</fullName>
    </recommendedName>
</protein>
<sequence length="309" mass="35129">MAERVLANLEAKFTEGNYYDILQSYKALYNRFSTQKKYKETVTLLESGCNKFLEYKQWNCAADLAKLLIECYKNFKIQYSDESKEPIIKIFKNFKGECAGKISFMRDAIEWSSKNGGDSKGSEEFHTLLAITLSEEGDYIDAQKHFIFGNDYFSFCEMLKNWTEDVDEEEKDLYITRAIFGLLCLKKLKQASDLYNLFTTKVIKGDPSPLLNFDRFLLLTLERDALPLFNLLRQKYERSLKRDPQFKKFLDQIANIFYNVPIQSGGGLSGMLSNLLSGFGGGMGMGGNSSGGGLASMEVDGPTIEDEMD</sequence>